<reference key="1">
    <citation type="submission" date="2007-05" db="EMBL/GenBank/DDBJ databases">
        <title>Complete sequence of chromosome of Staphylococcus aureus subsp. aureus JH9.</title>
        <authorList>
            <consortium name="US DOE Joint Genome Institute"/>
            <person name="Copeland A."/>
            <person name="Lucas S."/>
            <person name="Lapidus A."/>
            <person name="Barry K."/>
            <person name="Detter J.C."/>
            <person name="Glavina del Rio T."/>
            <person name="Hammon N."/>
            <person name="Israni S."/>
            <person name="Pitluck S."/>
            <person name="Chain P."/>
            <person name="Malfatti S."/>
            <person name="Shin M."/>
            <person name="Vergez L."/>
            <person name="Schmutz J."/>
            <person name="Larimer F."/>
            <person name="Land M."/>
            <person name="Hauser L."/>
            <person name="Kyrpides N."/>
            <person name="Kim E."/>
            <person name="Tomasz A."/>
            <person name="Richardson P."/>
        </authorList>
    </citation>
    <scope>NUCLEOTIDE SEQUENCE [LARGE SCALE GENOMIC DNA]</scope>
    <source>
        <strain>JH9</strain>
    </source>
</reference>
<gene>
    <name type="primary">norB</name>
    <name type="ordered locus">SaurJH9_1496</name>
</gene>
<dbReference type="EMBL" id="CP000703">
    <property type="protein sequence ID" value="ABQ49290.1"/>
    <property type="molecule type" value="Genomic_DNA"/>
</dbReference>
<dbReference type="RefSeq" id="WP_000414695.1">
    <property type="nucleotide sequence ID" value="NC_009487.1"/>
</dbReference>
<dbReference type="SMR" id="A5ISW7"/>
<dbReference type="KEGG" id="saj:SaurJH9_1496"/>
<dbReference type="HOGENOM" id="CLU_000960_28_3_9"/>
<dbReference type="GO" id="GO:0005886">
    <property type="term" value="C:plasma membrane"/>
    <property type="evidence" value="ECO:0007669"/>
    <property type="project" value="UniProtKB-SubCell"/>
</dbReference>
<dbReference type="GO" id="GO:0022857">
    <property type="term" value="F:transmembrane transporter activity"/>
    <property type="evidence" value="ECO:0007669"/>
    <property type="project" value="InterPro"/>
</dbReference>
<dbReference type="GO" id="GO:0046677">
    <property type="term" value="P:response to antibiotic"/>
    <property type="evidence" value="ECO:0007669"/>
    <property type="project" value="UniProtKB-KW"/>
</dbReference>
<dbReference type="CDD" id="cd17321">
    <property type="entry name" value="MFS_MMR_MDR_like"/>
    <property type="match status" value="1"/>
</dbReference>
<dbReference type="FunFam" id="1.20.1250.20:FF:000252">
    <property type="entry name" value="Quinolone resistance protein NorB"/>
    <property type="match status" value="1"/>
</dbReference>
<dbReference type="FunFam" id="1.20.1720.10:FF:000015">
    <property type="entry name" value="Quinolone resistance protein NorB"/>
    <property type="match status" value="1"/>
</dbReference>
<dbReference type="Gene3D" id="1.20.1250.20">
    <property type="entry name" value="MFS general substrate transporter like domains"/>
    <property type="match status" value="1"/>
</dbReference>
<dbReference type="Gene3D" id="1.20.1720.10">
    <property type="entry name" value="Multidrug resistance protein D"/>
    <property type="match status" value="1"/>
</dbReference>
<dbReference type="InterPro" id="IPR011701">
    <property type="entry name" value="MFS"/>
</dbReference>
<dbReference type="InterPro" id="IPR020846">
    <property type="entry name" value="MFS_dom"/>
</dbReference>
<dbReference type="InterPro" id="IPR036259">
    <property type="entry name" value="MFS_trans_sf"/>
</dbReference>
<dbReference type="PANTHER" id="PTHR42718">
    <property type="entry name" value="MAJOR FACILITATOR SUPERFAMILY MULTIDRUG TRANSPORTER MFSC"/>
    <property type="match status" value="1"/>
</dbReference>
<dbReference type="PANTHER" id="PTHR42718:SF9">
    <property type="entry name" value="MAJOR FACILITATOR SUPERFAMILY MULTIDRUG TRANSPORTER MFSC"/>
    <property type="match status" value="1"/>
</dbReference>
<dbReference type="Pfam" id="PF07690">
    <property type="entry name" value="MFS_1"/>
    <property type="match status" value="1"/>
</dbReference>
<dbReference type="SUPFAM" id="SSF103473">
    <property type="entry name" value="MFS general substrate transporter"/>
    <property type="match status" value="1"/>
</dbReference>
<dbReference type="PROSITE" id="PS50850">
    <property type="entry name" value="MFS"/>
    <property type="match status" value="1"/>
</dbReference>
<protein>
    <recommendedName>
        <fullName>Quinolone resistance protein NorB</fullName>
    </recommendedName>
</protein>
<evidence type="ECO:0000250" key="1"/>
<evidence type="ECO:0000255" key="2"/>
<evidence type="ECO:0000305" key="3"/>
<name>NORB_STAA9</name>
<organism>
    <name type="scientific">Staphylococcus aureus (strain JH9)</name>
    <dbReference type="NCBI Taxonomy" id="359786"/>
    <lineage>
        <taxon>Bacteria</taxon>
        <taxon>Bacillati</taxon>
        <taxon>Bacillota</taxon>
        <taxon>Bacilli</taxon>
        <taxon>Bacillales</taxon>
        <taxon>Staphylococcaceae</taxon>
        <taxon>Staphylococcus</taxon>
    </lineage>
</organism>
<comment type="function">
    <text evidence="1">Multidrug efflux pump that acts independently of NorA and is one of the factors that confers resistance against diverse quinolones and chemical compounds.</text>
</comment>
<comment type="subcellular location">
    <subcellularLocation>
        <location evidence="3">Cell membrane</location>
        <topology evidence="3">Multi-pass membrane protein</topology>
    </subcellularLocation>
</comment>
<comment type="similarity">
    <text evidence="3">Belongs to the major facilitator superfamily. TCR/Tet family.</text>
</comment>
<keyword id="KW-0046">Antibiotic resistance</keyword>
<keyword id="KW-1003">Cell membrane</keyword>
<keyword id="KW-0472">Membrane</keyword>
<keyword id="KW-0812">Transmembrane</keyword>
<keyword id="KW-1133">Transmembrane helix</keyword>
<keyword id="KW-0813">Transport</keyword>
<accession>A5ISW7</accession>
<sequence length="463" mass="49273">MEKPSREAFEGNNKLLIGIVLSVITFWLFAQSLVNVVPILEDSFNTDIGTVNIAVSITALFSGMFVVGAGGLADKYGRIKLTNIGIILNILGSLLIIISNIPLLLIIGRLIQGLSAACIMPATLSIIKSYYIGKDRQRALSYWSIGSWGGSGVCSFFGGAVATLLGWRWIFILSIIISLIALFLIKGTPETKSKSISLNKFDIKGLVLLVIMLLTLNILITKGSELGVTSLLFITLLAIAIGSFSLFIVLEKRATNPLIDFKLFKNKAYTGATASNFLLNGVAGTLIVANTFVQRGLGYSSLQAGSLSITYLVMVLIMIRVGEKLLQTLGCKKPMLIGTGVLIVGECLISLTFLPEILYVICCIIGYLFFGLGLGIYATPSTDTAIANAPLEKVGVAAGIYKMASALGGAFGVALSGAVYAIVSNMTNIYTGAMIALWLNAGMGILSFVIILLLVPKQNDTQL</sequence>
<proteinExistence type="inferred from homology"/>
<feature type="chain" id="PRO_0000361957" description="Quinolone resistance protein NorB">
    <location>
        <begin position="1"/>
        <end position="463"/>
    </location>
</feature>
<feature type="transmembrane region" description="Helical" evidence="2">
    <location>
        <begin position="17"/>
        <end position="37"/>
    </location>
</feature>
<feature type="transmembrane region" description="Helical" evidence="2">
    <location>
        <begin position="53"/>
        <end position="73"/>
    </location>
</feature>
<feature type="transmembrane region" description="Helical" evidence="2">
    <location>
        <begin position="86"/>
        <end position="106"/>
    </location>
</feature>
<feature type="transmembrane region" description="Helical" evidence="2">
    <location>
        <begin position="107"/>
        <end position="127"/>
    </location>
</feature>
<feature type="transmembrane region" description="Helical" evidence="2">
    <location>
        <begin position="142"/>
        <end position="162"/>
    </location>
</feature>
<feature type="transmembrane region" description="Helical" evidence="2">
    <location>
        <begin position="165"/>
        <end position="185"/>
    </location>
</feature>
<feature type="transmembrane region" description="Helical" evidence="2">
    <location>
        <begin position="201"/>
        <end position="221"/>
    </location>
</feature>
<feature type="transmembrane region" description="Helical" evidence="2">
    <location>
        <begin position="230"/>
        <end position="250"/>
    </location>
</feature>
<feature type="transmembrane region" description="Helical" evidence="2">
    <location>
        <begin position="273"/>
        <end position="293"/>
    </location>
</feature>
<feature type="transmembrane region" description="Helical" evidence="2">
    <location>
        <begin position="299"/>
        <end position="319"/>
    </location>
</feature>
<feature type="transmembrane region" description="Helical" evidence="2">
    <location>
        <begin position="334"/>
        <end position="354"/>
    </location>
</feature>
<feature type="transmembrane region" description="Helical" evidence="2">
    <location>
        <begin position="357"/>
        <end position="377"/>
    </location>
</feature>
<feature type="transmembrane region" description="Helical" evidence="2">
    <location>
        <begin position="403"/>
        <end position="423"/>
    </location>
</feature>
<feature type="transmembrane region" description="Helical" evidence="2">
    <location>
        <begin position="435"/>
        <end position="455"/>
    </location>
</feature>